<evidence type="ECO:0000255" key="1">
    <source>
        <dbReference type="HAMAP-Rule" id="MF_01333"/>
    </source>
</evidence>
<evidence type="ECO:0000305" key="2"/>
<accession>B7LRS4</accession>
<comment type="function">
    <text evidence="1">This is one of the proteins that bind and probably mediate the attachment of the 5S RNA into the large ribosomal subunit, where it forms part of the central protuberance. In the 70S ribosome it contacts protein S13 of the 30S subunit (bridge B1b), connecting the 2 subunits; this bridge is implicated in subunit movement. Contacts the P site tRNA; the 5S rRNA and some of its associated proteins might help stabilize positioning of ribosome-bound tRNAs.</text>
</comment>
<comment type="subunit">
    <text evidence="1">Part of the 50S ribosomal subunit; part of the 5S rRNA/L5/L18/L25 subcomplex. Contacts the 5S rRNA and the P site tRNA. Forms a bridge to the 30S subunit in the 70S ribosome.</text>
</comment>
<comment type="similarity">
    <text evidence="1">Belongs to the universal ribosomal protein uL5 family.</text>
</comment>
<reference key="1">
    <citation type="journal article" date="2009" name="PLoS Genet.">
        <title>Organised genome dynamics in the Escherichia coli species results in highly diverse adaptive paths.</title>
        <authorList>
            <person name="Touchon M."/>
            <person name="Hoede C."/>
            <person name="Tenaillon O."/>
            <person name="Barbe V."/>
            <person name="Baeriswyl S."/>
            <person name="Bidet P."/>
            <person name="Bingen E."/>
            <person name="Bonacorsi S."/>
            <person name="Bouchier C."/>
            <person name="Bouvet O."/>
            <person name="Calteau A."/>
            <person name="Chiapello H."/>
            <person name="Clermont O."/>
            <person name="Cruveiller S."/>
            <person name="Danchin A."/>
            <person name="Diard M."/>
            <person name="Dossat C."/>
            <person name="Karoui M.E."/>
            <person name="Frapy E."/>
            <person name="Garry L."/>
            <person name="Ghigo J.M."/>
            <person name="Gilles A.M."/>
            <person name="Johnson J."/>
            <person name="Le Bouguenec C."/>
            <person name="Lescat M."/>
            <person name="Mangenot S."/>
            <person name="Martinez-Jehanne V."/>
            <person name="Matic I."/>
            <person name="Nassif X."/>
            <person name="Oztas S."/>
            <person name="Petit M.A."/>
            <person name="Pichon C."/>
            <person name="Rouy Z."/>
            <person name="Ruf C.S."/>
            <person name="Schneider D."/>
            <person name="Tourret J."/>
            <person name="Vacherie B."/>
            <person name="Vallenet D."/>
            <person name="Medigue C."/>
            <person name="Rocha E.P.C."/>
            <person name="Denamur E."/>
        </authorList>
    </citation>
    <scope>NUCLEOTIDE SEQUENCE [LARGE SCALE GENOMIC DNA]</scope>
    <source>
        <strain>ATCC 35469 / DSM 13698 / BCRC 15582 / CCUG 18766 / IAM 14443 / JCM 21226 / LMG 7866 / NBRC 102419 / NCTC 12128 / CDC 0568-73</strain>
    </source>
</reference>
<protein>
    <recommendedName>
        <fullName evidence="1">Large ribosomal subunit protein uL5</fullName>
    </recommendedName>
    <alternativeName>
        <fullName evidence="2">50S ribosomal protein L5</fullName>
    </alternativeName>
</protein>
<organism>
    <name type="scientific">Escherichia fergusonii (strain ATCC 35469 / DSM 13698 / CCUG 18766 / IAM 14443 / JCM 21226 / LMG 7866 / NBRC 102419 / NCTC 12128 / CDC 0568-73)</name>
    <dbReference type="NCBI Taxonomy" id="585054"/>
    <lineage>
        <taxon>Bacteria</taxon>
        <taxon>Pseudomonadati</taxon>
        <taxon>Pseudomonadota</taxon>
        <taxon>Gammaproteobacteria</taxon>
        <taxon>Enterobacterales</taxon>
        <taxon>Enterobacteriaceae</taxon>
        <taxon>Escherichia</taxon>
    </lineage>
</organism>
<name>RL5_ESCF3</name>
<gene>
    <name evidence="1" type="primary">rplE</name>
    <name type="ordered locus">EFER_3291</name>
</gene>
<dbReference type="EMBL" id="CU928158">
    <property type="protein sequence ID" value="CAQ90771.1"/>
    <property type="molecule type" value="Genomic_DNA"/>
</dbReference>
<dbReference type="RefSeq" id="WP_001096200.1">
    <property type="nucleotide sequence ID" value="NC_011740.1"/>
</dbReference>
<dbReference type="SMR" id="B7LRS4"/>
<dbReference type="GeneID" id="93778679"/>
<dbReference type="KEGG" id="efe:EFER_3291"/>
<dbReference type="HOGENOM" id="CLU_061015_2_1_6"/>
<dbReference type="OrthoDB" id="9806626at2"/>
<dbReference type="Proteomes" id="UP000000745">
    <property type="component" value="Chromosome"/>
</dbReference>
<dbReference type="GO" id="GO:1990904">
    <property type="term" value="C:ribonucleoprotein complex"/>
    <property type="evidence" value="ECO:0007669"/>
    <property type="project" value="UniProtKB-KW"/>
</dbReference>
<dbReference type="GO" id="GO:0005840">
    <property type="term" value="C:ribosome"/>
    <property type="evidence" value="ECO:0007669"/>
    <property type="project" value="UniProtKB-KW"/>
</dbReference>
<dbReference type="GO" id="GO:0019843">
    <property type="term" value="F:rRNA binding"/>
    <property type="evidence" value="ECO:0007669"/>
    <property type="project" value="UniProtKB-UniRule"/>
</dbReference>
<dbReference type="GO" id="GO:0003735">
    <property type="term" value="F:structural constituent of ribosome"/>
    <property type="evidence" value="ECO:0007669"/>
    <property type="project" value="InterPro"/>
</dbReference>
<dbReference type="GO" id="GO:0000049">
    <property type="term" value="F:tRNA binding"/>
    <property type="evidence" value="ECO:0007669"/>
    <property type="project" value="UniProtKB-UniRule"/>
</dbReference>
<dbReference type="GO" id="GO:0006412">
    <property type="term" value="P:translation"/>
    <property type="evidence" value="ECO:0007669"/>
    <property type="project" value="UniProtKB-UniRule"/>
</dbReference>
<dbReference type="FunFam" id="3.30.1440.10:FF:000001">
    <property type="entry name" value="50S ribosomal protein L5"/>
    <property type="match status" value="1"/>
</dbReference>
<dbReference type="Gene3D" id="3.30.1440.10">
    <property type="match status" value="1"/>
</dbReference>
<dbReference type="HAMAP" id="MF_01333_B">
    <property type="entry name" value="Ribosomal_uL5_B"/>
    <property type="match status" value="1"/>
</dbReference>
<dbReference type="InterPro" id="IPR002132">
    <property type="entry name" value="Ribosomal_uL5"/>
</dbReference>
<dbReference type="InterPro" id="IPR020930">
    <property type="entry name" value="Ribosomal_uL5_bac-type"/>
</dbReference>
<dbReference type="InterPro" id="IPR031309">
    <property type="entry name" value="Ribosomal_uL5_C"/>
</dbReference>
<dbReference type="InterPro" id="IPR020929">
    <property type="entry name" value="Ribosomal_uL5_CS"/>
</dbReference>
<dbReference type="InterPro" id="IPR022803">
    <property type="entry name" value="Ribosomal_uL5_dom_sf"/>
</dbReference>
<dbReference type="InterPro" id="IPR031310">
    <property type="entry name" value="Ribosomal_uL5_N"/>
</dbReference>
<dbReference type="NCBIfam" id="NF000585">
    <property type="entry name" value="PRK00010.1"/>
    <property type="match status" value="1"/>
</dbReference>
<dbReference type="PANTHER" id="PTHR11994">
    <property type="entry name" value="60S RIBOSOMAL PROTEIN L11-RELATED"/>
    <property type="match status" value="1"/>
</dbReference>
<dbReference type="Pfam" id="PF00281">
    <property type="entry name" value="Ribosomal_L5"/>
    <property type="match status" value="1"/>
</dbReference>
<dbReference type="Pfam" id="PF00673">
    <property type="entry name" value="Ribosomal_L5_C"/>
    <property type="match status" value="1"/>
</dbReference>
<dbReference type="PIRSF" id="PIRSF002161">
    <property type="entry name" value="Ribosomal_L5"/>
    <property type="match status" value="1"/>
</dbReference>
<dbReference type="SUPFAM" id="SSF55282">
    <property type="entry name" value="RL5-like"/>
    <property type="match status" value="1"/>
</dbReference>
<dbReference type="PROSITE" id="PS00358">
    <property type="entry name" value="RIBOSOMAL_L5"/>
    <property type="match status" value="1"/>
</dbReference>
<sequence length="179" mass="20302">MAKLHDYYKDEVVKKLMTEFNYNSVMQVPRVEKITLNMGVGEAIADKKLLDNAAADLAAISGQKPLITKARKSVAGFKIRQGYPIGCKVTLRGERMWEFFERLITIAVPRIRDFRGLSAKSFDGRGNYSMGVREQIIFPEIDYDKVDRVRGLDITITTTAKSDEEGRALLAAFDFPFRK</sequence>
<keyword id="KW-0007">Acetylation</keyword>
<keyword id="KW-0687">Ribonucleoprotein</keyword>
<keyword id="KW-0689">Ribosomal protein</keyword>
<keyword id="KW-0694">RNA-binding</keyword>
<keyword id="KW-0699">rRNA-binding</keyword>
<keyword id="KW-0820">tRNA-binding</keyword>
<feature type="chain" id="PRO_1000142402" description="Large ribosomal subunit protein uL5">
    <location>
        <begin position="1"/>
        <end position="179"/>
    </location>
</feature>
<feature type="modified residue" description="N6-acetyllysine" evidence="1">
    <location>
        <position position="3"/>
    </location>
</feature>
<proteinExistence type="inferred from homology"/>